<evidence type="ECO:0000256" key="1">
    <source>
        <dbReference type="SAM" id="MobiDB-lite"/>
    </source>
</evidence>
<evidence type="ECO:0000269" key="2">
    <source>
    </source>
</evidence>
<evidence type="ECO:0000269" key="3">
    <source>
    </source>
</evidence>
<evidence type="ECO:0000303" key="4">
    <source>
    </source>
</evidence>
<evidence type="ECO:0000305" key="5"/>
<evidence type="ECO:0000312" key="6">
    <source>
        <dbReference type="Araport" id="AT5G02520"/>
    </source>
</evidence>
<evidence type="ECO:0000312" key="7">
    <source>
        <dbReference type="EMBL" id="CAB85989.1"/>
    </source>
</evidence>
<gene>
    <name evidence="4" type="primary">KNL2</name>
    <name evidence="6" type="ordered locus">At5g02520</name>
    <name evidence="7" type="ORF">T22P11_110</name>
</gene>
<dbReference type="EMBL" id="AL162971">
    <property type="protein sequence ID" value="CAB85989.1"/>
    <property type="status" value="ALT_SEQ"/>
    <property type="molecule type" value="Genomic_DNA"/>
</dbReference>
<dbReference type="EMBL" id="CP002688">
    <property type="protein sequence ID" value="AED90484.1"/>
    <property type="molecule type" value="Genomic_DNA"/>
</dbReference>
<dbReference type="EMBL" id="AY050424">
    <property type="protein sequence ID" value="AAK91440.1"/>
    <property type="molecule type" value="mRNA"/>
</dbReference>
<dbReference type="EMBL" id="AY059665">
    <property type="protein sequence ID" value="AAL31158.1"/>
    <property type="molecule type" value="mRNA"/>
</dbReference>
<dbReference type="PIR" id="T48273">
    <property type="entry name" value="T48273"/>
</dbReference>
<dbReference type="RefSeq" id="NP_568101.4">
    <property type="nucleotide sequence ID" value="NM_120330.7"/>
</dbReference>
<dbReference type="FunCoup" id="F4KCE9">
    <property type="interactions" value="442"/>
</dbReference>
<dbReference type="STRING" id="3702.F4KCE9"/>
<dbReference type="iPTMnet" id="F4KCE9"/>
<dbReference type="PaxDb" id="3702-AT5G02520.1"/>
<dbReference type="EnsemblPlants" id="AT5G02520.1">
    <property type="protein sequence ID" value="AT5G02520.1"/>
    <property type="gene ID" value="AT5G02520"/>
</dbReference>
<dbReference type="GeneID" id="831892"/>
<dbReference type="Gramene" id="AT5G02520.1">
    <property type="protein sequence ID" value="AT5G02520.1"/>
    <property type="gene ID" value="AT5G02520"/>
</dbReference>
<dbReference type="KEGG" id="ath:AT5G02520"/>
<dbReference type="Araport" id="AT5G02520"/>
<dbReference type="TAIR" id="AT5G02520">
    <property type="gene designation" value="KNL2"/>
</dbReference>
<dbReference type="eggNOG" id="ENOG502S4QI">
    <property type="taxonomic scope" value="Eukaryota"/>
</dbReference>
<dbReference type="HOGENOM" id="CLU_042973_0_0_1"/>
<dbReference type="InParanoid" id="F4KCE9"/>
<dbReference type="OMA" id="DECEVIN"/>
<dbReference type="PRO" id="PR:F4KCE9"/>
<dbReference type="Proteomes" id="UP000006548">
    <property type="component" value="Chromosome 5"/>
</dbReference>
<dbReference type="ExpressionAtlas" id="F4KCE9">
    <property type="expression patterns" value="baseline and differential"/>
</dbReference>
<dbReference type="GO" id="GO:0010369">
    <property type="term" value="C:chromocenter"/>
    <property type="evidence" value="ECO:0000314"/>
    <property type="project" value="TAIR"/>
</dbReference>
<dbReference type="GO" id="GO:0000775">
    <property type="term" value="C:chromosome, centromeric region"/>
    <property type="evidence" value="ECO:0007669"/>
    <property type="project" value="UniProtKB-SubCell"/>
</dbReference>
<dbReference type="GO" id="GO:0016604">
    <property type="term" value="C:nuclear body"/>
    <property type="evidence" value="ECO:0007669"/>
    <property type="project" value="UniProtKB-SubCell"/>
</dbReference>
<dbReference type="GO" id="GO:0005730">
    <property type="term" value="C:nucleolus"/>
    <property type="evidence" value="ECO:0007669"/>
    <property type="project" value="UniProtKB-SubCell"/>
</dbReference>
<dbReference type="GO" id="GO:0005654">
    <property type="term" value="C:nucleoplasm"/>
    <property type="evidence" value="ECO:0000314"/>
    <property type="project" value="TAIR"/>
</dbReference>
<dbReference type="GO" id="GO:0003677">
    <property type="term" value="F:DNA binding"/>
    <property type="evidence" value="ECO:0007669"/>
    <property type="project" value="UniProtKB-KW"/>
</dbReference>
<dbReference type="GO" id="GO:0003723">
    <property type="term" value="F:RNA binding"/>
    <property type="evidence" value="ECO:0007669"/>
    <property type="project" value="UniProtKB-KW"/>
</dbReference>
<dbReference type="GO" id="GO:0051301">
    <property type="term" value="P:cell division"/>
    <property type="evidence" value="ECO:0007669"/>
    <property type="project" value="UniProtKB-KW"/>
</dbReference>
<dbReference type="GO" id="GO:0051321">
    <property type="term" value="P:meiotic cell cycle"/>
    <property type="evidence" value="ECO:0007669"/>
    <property type="project" value="UniProtKB-KW"/>
</dbReference>
<dbReference type="InterPro" id="IPR053090">
    <property type="entry name" value="Centromere_KNL-2_homolog"/>
</dbReference>
<dbReference type="InterPro" id="IPR015216">
    <property type="entry name" value="SANTA"/>
</dbReference>
<dbReference type="PANTHER" id="PTHR35311">
    <property type="entry name" value="KINETOCHORE-ASSOCIATED PROTEIN KNL-2 HOMOLOG"/>
    <property type="match status" value="1"/>
</dbReference>
<dbReference type="PANTHER" id="PTHR35311:SF9">
    <property type="entry name" value="KINETOCHORE-ASSOCIATED PROTEIN KNL-2 HOMOLOG"/>
    <property type="match status" value="1"/>
</dbReference>
<dbReference type="Pfam" id="PF09133">
    <property type="entry name" value="SANTA"/>
    <property type="match status" value="1"/>
</dbReference>
<keyword id="KW-0131">Cell cycle</keyword>
<keyword id="KW-0132">Cell division</keyword>
<keyword id="KW-0137">Centromere</keyword>
<keyword id="KW-0158">Chromosome</keyword>
<keyword id="KW-0238">DNA-binding</keyword>
<keyword id="KW-0469">Meiosis</keyword>
<keyword id="KW-0498">Mitosis</keyword>
<keyword id="KW-0539">Nucleus</keyword>
<keyword id="KW-1185">Reference proteome</keyword>
<keyword id="KW-0694">RNA-binding</keyword>
<proteinExistence type="evidence at protein level"/>
<reference key="1">
    <citation type="journal article" date="2000" name="Nature">
        <title>Sequence and analysis of chromosome 5 of the plant Arabidopsis thaliana.</title>
        <authorList>
            <person name="Tabata S."/>
            <person name="Kaneko T."/>
            <person name="Nakamura Y."/>
            <person name="Kotani H."/>
            <person name="Kato T."/>
            <person name="Asamizu E."/>
            <person name="Miyajima N."/>
            <person name="Sasamoto S."/>
            <person name="Kimura T."/>
            <person name="Hosouchi T."/>
            <person name="Kawashima K."/>
            <person name="Kohara M."/>
            <person name="Matsumoto M."/>
            <person name="Matsuno A."/>
            <person name="Muraki A."/>
            <person name="Nakayama S."/>
            <person name="Nakazaki N."/>
            <person name="Naruo K."/>
            <person name="Okumura S."/>
            <person name="Shinpo S."/>
            <person name="Takeuchi C."/>
            <person name="Wada T."/>
            <person name="Watanabe A."/>
            <person name="Yamada M."/>
            <person name="Yasuda M."/>
            <person name="Sato S."/>
            <person name="de la Bastide M."/>
            <person name="Huang E."/>
            <person name="Spiegel L."/>
            <person name="Gnoj L."/>
            <person name="O'Shaughnessy A."/>
            <person name="Preston R."/>
            <person name="Habermann K."/>
            <person name="Murray J."/>
            <person name="Johnson D."/>
            <person name="Rohlfing T."/>
            <person name="Nelson J."/>
            <person name="Stoneking T."/>
            <person name="Pepin K."/>
            <person name="Spieth J."/>
            <person name="Sekhon M."/>
            <person name="Armstrong J."/>
            <person name="Becker M."/>
            <person name="Belter E."/>
            <person name="Cordum H."/>
            <person name="Cordes M."/>
            <person name="Courtney L."/>
            <person name="Courtney W."/>
            <person name="Dante M."/>
            <person name="Du H."/>
            <person name="Edwards J."/>
            <person name="Fryman J."/>
            <person name="Haakensen B."/>
            <person name="Lamar E."/>
            <person name="Latreille P."/>
            <person name="Leonard S."/>
            <person name="Meyer R."/>
            <person name="Mulvaney E."/>
            <person name="Ozersky P."/>
            <person name="Riley A."/>
            <person name="Strowmatt C."/>
            <person name="Wagner-McPherson C."/>
            <person name="Wollam A."/>
            <person name="Yoakum M."/>
            <person name="Bell M."/>
            <person name="Dedhia N."/>
            <person name="Parnell L."/>
            <person name="Shah R."/>
            <person name="Rodriguez M."/>
            <person name="Hoon See L."/>
            <person name="Vil D."/>
            <person name="Baker J."/>
            <person name="Kirchoff K."/>
            <person name="Toth K."/>
            <person name="King L."/>
            <person name="Bahret A."/>
            <person name="Miller B."/>
            <person name="Marra M.A."/>
            <person name="Martienssen R."/>
            <person name="McCombie W.R."/>
            <person name="Wilson R.K."/>
            <person name="Murphy G."/>
            <person name="Bancroft I."/>
            <person name="Volckaert G."/>
            <person name="Wambutt R."/>
            <person name="Duesterhoeft A."/>
            <person name="Stiekema W."/>
            <person name="Pohl T."/>
            <person name="Entian K.-D."/>
            <person name="Terryn N."/>
            <person name="Hartley N."/>
            <person name="Bent E."/>
            <person name="Johnson S."/>
            <person name="Langham S.-A."/>
            <person name="McCullagh B."/>
            <person name="Robben J."/>
            <person name="Grymonprez B."/>
            <person name="Zimmermann W."/>
            <person name="Ramsperger U."/>
            <person name="Wedler H."/>
            <person name="Balke K."/>
            <person name="Wedler E."/>
            <person name="Peters S."/>
            <person name="van Staveren M."/>
            <person name="Dirkse W."/>
            <person name="Mooijman P."/>
            <person name="Klein Lankhorst R."/>
            <person name="Weitzenegger T."/>
            <person name="Bothe G."/>
            <person name="Rose M."/>
            <person name="Hauf J."/>
            <person name="Berneiser S."/>
            <person name="Hempel S."/>
            <person name="Feldpausch M."/>
            <person name="Lamberth S."/>
            <person name="Villarroel R."/>
            <person name="Gielen J."/>
            <person name="Ardiles W."/>
            <person name="Bents O."/>
            <person name="Lemcke K."/>
            <person name="Kolesov G."/>
            <person name="Mayer K.F.X."/>
            <person name="Rudd S."/>
            <person name="Schoof H."/>
            <person name="Schueller C."/>
            <person name="Zaccaria P."/>
            <person name="Mewes H.-W."/>
            <person name="Bevan M."/>
            <person name="Fransz P.F."/>
        </authorList>
    </citation>
    <scope>NUCLEOTIDE SEQUENCE [LARGE SCALE GENOMIC DNA]</scope>
    <source>
        <strain>cv. Columbia</strain>
    </source>
</reference>
<reference key="2">
    <citation type="journal article" date="2017" name="Plant J.">
        <title>Araport11: a complete reannotation of the Arabidopsis thaliana reference genome.</title>
        <authorList>
            <person name="Cheng C.Y."/>
            <person name="Krishnakumar V."/>
            <person name="Chan A.P."/>
            <person name="Thibaud-Nissen F."/>
            <person name="Schobel S."/>
            <person name="Town C.D."/>
        </authorList>
    </citation>
    <scope>GENOME REANNOTATION</scope>
    <source>
        <strain>cv. Columbia</strain>
    </source>
</reference>
<reference key="3">
    <citation type="journal article" date="2003" name="Science">
        <title>Empirical analysis of transcriptional activity in the Arabidopsis genome.</title>
        <authorList>
            <person name="Yamada K."/>
            <person name="Lim J."/>
            <person name="Dale J.M."/>
            <person name="Chen H."/>
            <person name="Shinn P."/>
            <person name="Palm C.J."/>
            <person name="Southwick A.M."/>
            <person name="Wu H.C."/>
            <person name="Kim C.J."/>
            <person name="Nguyen M."/>
            <person name="Pham P.K."/>
            <person name="Cheuk R.F."/>
            <person name="Karlin-Newmann G."/>
            <person name="Liu S.X."/>
            <person name="Lam B."/>
            <person name="Sakano H."/>
            <person name="Wu T."/>
            <person name="Yu G."/>
            <person name="Miranda M."/>
            <person name="Quach H.L."/>
            <person name="Tripp M."/>
            <person name="Chang C.H."/>
            <person name="Lee J.M."/>
            <person name="Toriumi M.J."/>
            <person name="Chan M.M."/>
            <person name="Tang C.C."/>
            <person name="Onodera C.S."/>
            <person name="Deng J.M."/>
            <person name="Akiyama K."/>
            <person name="Ansari Y."/>
            <person name="Arakawa T."/>
            <person name="Banh J."/>
            <person name="Banno F."/>
            <person name="Bowser L."/>
            <person name="Brooks S.Y."/>
            <person name="Carninci P."/>
            <person name="Chao Q."/>
            <person name="Choy N."/>
            <person name="Enju A."/>
            <person name="Goldsmith A.D."/>
            <person name="Gurjal M."/>
            <person name="Hansen N.F."/>
            <person name="Hayashizaki Y."/>
            <person name="Johnson-Hopson C."/>
            <person name="Hsuan V.W."/>
            <person name="Iida K."/>
            <person name="Karnes M."/>
            <person name="Khan S."/>
            <person name="Koesema E."/>
            <person name="Ishida J."/>
            <person name="Jiang P.X."/>
            <person name="Jones T."/>
            <person name="Kawai J."/>
            <person name="Kamiya A."/>
            <person name="Meyers C."/>
            <person name="Nakajima M."/>
            <person name="Narusaka M."/>
            <person name="Seki M."/>
            <person name="Sakurai T."/>
            <person name="Satou M."/>
            <person name="Tamse R."/>
            <person name="Vaysberg M."/>
            <person name="Wallender E.K."/>
            <person name="Wong C."/>
            <person name="Yamamura Y."/>
            <person name="Yuan S."/>
            <person name="Shinozaki K."/>
            <person name="Davis R.W."/>
            <person name="Theologis A."/>
            <person name="Ecker J.R."/>
        </authorList>
    </citation>
    <scope>NUCLEOTIDE SEQUENCE [LARGE SCALE MRNA] OF 363-598</scope>
    <source>
        <strain>cv. Columbia</strain>
    </source>
</reference>
<reference key="4">
    <citation type="journal article" date="2013" name="Plant Cell">
        <title>Arabidopsis kinetochore null2 is an upstream component for centromeric histone H3 variant cenH3 deposition at centromeres.</title>
        <authorList>
            <person name="Lermontova I."/>
            <person name="Kuhlmann M."/>
            <person name="Friedel S."/>
            <person name="Rutten T."/>
            <person name="Heckmann S."/>
            <person name="Sandmann M."/>
            <person name="Demidov D."/>
            <person name="Schubert V."/>
            <person name="Schubert I."/>
        </authorList>
    </citation>
    <scope>FUNCTION</scope>
    <scope>SUBCELLULAR LOCATION</scope>
    <scope>TISSUE SPECIFICITY</scope>
    <scope>DISRUPTION PHENOTYPE</scope>
</reference>
<reference key="5">
    <citation type="journal article" date="2017" name="Plant Cell">
        <title>Targeting of Arabidopsis KNL2 to centromeres depends on the conserved CENPC-k motif in its C terminus.</title>
        <authorList>
            <person name="Sandmann M."/>
            <person name="Talbert P."/>
            <person name="Demidov D."/>
            <person name="Kuhlmann M."/>
            <person name="Rutten T."/>
            <person name="Conrad U."/>
            <person name="Lermontova I."/>
        </authorList>
    </citation>
    <scope>FUNCTION</scope>
    <scope>SUBCELLULAR LOCATION</scope>
    <scope>MUTAGENESIS OF ARG-546 AND TRP-555</scope>
</reference>
<comment type="function">
    <text evidence="2 3">Involved in recognition of centromeres and centromeric localization of the centromere-specific histone CENH3. Required for normal progression of mitosis and meiosis. May play a role in the determination of the epigenetic status of centromeres (PubMed:24014547). Binds DNA and RNA in vitro (PubMed:28062749).</text>
</comment>
<comment type="subcellular location">
    <subcellularLocation>
        <location evidence="2">Nucleus</location>
        <location evidence="2">Nucleoplasm</location>
    </subcellularLocation>
    <subcellularLocation>
        <location evidence="2">Nucleus</location>
        <location evidence="2">Nuclear body</location>
    </subcellularLocation>
    <subcellularLocation>
        <location evidence="2">Nucleus</location>
        <location evidence="2">Nucleolus</location>
    </subcellularLocation>
    <subcellularLocation>
        <location evidence="2 3">Chromosome</location>
        <location evidence="2 3">Centromere</location>
    </subcellularLocation>
    <text evidence="2 3">Localizes at centromeres during all stages of the mitotic cell cycle, except from metaphase to mid-anaphase (PubMed:24014547). Colocalizes with CENH3 at centromeres in interphase nuclei (PubMed:24014547, PubMed:28062749).</text>
</comment>
<comment type="tissue specificity">
    <text evidence="2">Expressed in shoot apical meristem, leaf primordia, basal parts of emerging leaves, inflorescence meristems, young inflorescences, developing flower buds, developing sepals and pistils, styles and young siliques.</text>
</comment>
<comment type="disruption phenotype">
    <text evidence="2">Reduced growth, abnormal leaf shape, defect in mature pollen grain formation and aborted seeds, due to defects in mitosis and meiosis.</text>
</comment>
<comment type="similarity">
    <text>Belongs to the KNL2 family.</text>
</comment>
<comment type="sequence caution" evidence="5">
    <conflict type="erroneous gene model prediction">
        <sequence resource="EMBL-CDS" id="CAB85989"/>
    </conflict>
</comment>
<accession>F4KCE9</accession>
<accession>Q94A31</accession>
<accession>Q9LZ50</accession>
<feature type="chain" id="PRO_0000443820" description="Kinetochore-associated protein KNL-2 homolog">
    <location>
        <begin position="1"/>
        <end position="598"/>
    </location>
</feature>
<feature type="domain" description="SANTA">
    <location>
        <begin position="19"/>
        <end position="111"/>
    </location>
</feature>
<feature type="region of interest" description="Disordered" evidence="1">
    <location>
        <begin position="335"/>
        <end position="403"/>
    </location>
</feature>
<feature type="region of interest" description="Disordered" evidence="1">
    <location>
        <begin position="445"/>
        <end position="500"/>
    </location>
</feature>
<feature type="region of interest" description="Disordered" evidence="1">
    <location>
        <begin position="520"/>
        <end position="542"/>
    </location>
</feature>
<feature type="region of interest" description="Required for localization at centromeres" evidence="3">
    <location>
        <begin position="538"/>
        <end position="572"/>
    </location>
</feature>
<feature type="region of interest" description="Disordered" evidence="1">
    <location>
        <begin position="572"/>
        <end position="598"/>
    </location>
</feature>
<feature type="compositionally biased region" description="Basic and acidic residues" evidence="1">
    <location>
        <begin position="335"/>
        <end position="344"/>
    </location>
</feature>
<feature type="compositionally biased region" description="Basic and acidic residues" evidence="1">
    <location>
        <begin position="371"/>
        <end position="381"/>
    </location>
</feature>
<feature type="compositionally biased region" description="Polar residues" evidence="1">
    <location>
        <begin position="383"/>
        <end position="392"/>
    </location>
</feature>
<feature type="compositionally biased region" description="Polar residues" evidence="1">
    <location>
        <begin position="527"/>
        <end position="539"/>
    </location>
</feature>
<feature type="mutagenesis site" description="Unable to localize at centromeres." evidence="3">
    <original>R</original>
    <variation>A</variation>
    <location>
        <position position="546"/>
    </location>
</feature>
<feature type="mutagenesis site" description="Unable to localize at centromeres." evidence="3">
    <original>W</original>
    <variation>R</variation>
    <location>
        <position position="555"/>
    </location>
</feature>
<organism>
    <name type="scientific">Arabidopsis thaliana</name>
    <name type="common">Mouse-ear cress</name>
    <dbReference type="NCBI Taxonomy" id="3702"/>
    <lineage>
        <taxon>Eukaryota</taxon>
        <taxon>Viridiplantae</taxon>
        <taxon>Streptophyta</taxon>
        <taxon>Embryophyta</taxon>
        <taxon>Tracheophyta</taxon>
        <taxon>Spermatophyta</taxon>
        <taxon>Magnoliopsida</taxon>
        <taxon>eudicotyledons</taxon>
        <taxon>Gunneridae</taxon>
        <taxon>Pentapetalae</taxon>
        <taxon>rosids</taxon>
        <taxon>malvids</taxon>
        <taxon>Brassicales</taxon>
        <taxon>Brassicaceae</taxon>
        <taxon>Camelineae</taxon>
        <taxon>Arabidopsis</taxon>
    </lineage>
</organism>
<protein>
    <recommendedName>
        <fullName evidence="5">Kinetochore-associated protein KNL-2 homolog</fullName>
    </recommendedName>
    <alternativeName>
        <fullName evidence="4">Protein KINETOCHORE NULL 2</fullName>
    </alternativeName>
</protein>
<sequence>MTEPNLDEDGSKSSFQKTVVLRDWWLIKCPKEFEGKQFGVAGFEESVETRAMRVFTSSPITKALDVFTLLASDGIYITLRGFLNKERVLKNGFNPEISREFIFGFPPCWERVCNSCFEGDSFGTDVNTVPSTIEKACPPILSPCKYSNRNLKDNPAESREKSNVTETDIAEINDKGGSGARDIKTARRRSLHLQIKRILESSKVRKTANDGDHGSEFLNTAKRGDVERDGCEVINNEDSEWKLDESEVQNLCNDGDNGSEGFIKAKSSDVEKDKSEAIDNDVISPAVGSGIKHTGADNVDKVTSASATGESLTSEQQNGLLVTTASPHSLLKDLAKSSKPEKKGISKKSGKILRSDDNVVDPMNYSGTKVKSAENKRKIDASKLQSPTSNVAEHSKEGLNNAKSNDVEKDVCVAINNEVISPVKGFGKRLSGTDVERLTSKNATKESLTSVQRKGRVKVSKAFQDPLSKGKSKKSEKTLQSNSNVVEPMNHFRSEAEEAEENLSWEKIKRKIDFDVEVTPEKKVKQQKTNAASTDSLGQKRSRSGRVLVSSLEFWRNQIPVYDMDRNLIQVKDGSETNSAPSKGKGSDSRKRRNLKIK</sequence>
<name>KNL2_ARATH</name>